<evidence type="ECO:0000255" key="1">
    <source>
        <dbReference type="HAMAP-Rule" id="MF_00380"/>
    </source>
</evidence>
<reference key="1">
    <citation type="submission" date="2007-07" db="EMBL/GenBank/DDBJ databases">
        <title>Complete sequence of chromosome of Xanthobacter autotrophicus Py2.</title>
        <authorList>
            <consortium name="US DOE Joint Genome Institute"/>
            <person name="Copeland A."/>
            <person name="Lucas S."/>
            <person name="Lapidus A."/>
            <person name="Barry K."/>
            <person name="Glavina del Rio T."/>
            <person name="Hammon N."/>
            <person name="Israni S."/>
            <person name="Dalin E."/>
            <person name="Tice H."/>
            <person name="Pitluck S."/>
            <person name="Sims D."/>
            <person name="Brettin T."/>
            <person name="Bruce D."/>
            <person name="Detter J.C."/>
            <person name="Han C."/>
            <person name="Tapia R."/>
            <person name="Brainard J."/>
            <person name="Schmutz J."/>
            <person name="Larimer F."/>
            <person name="Land M."/>
            <person name="Hauser L."/>
            <person name="Kyrpides N."/>
            <person name="Kim E."/>
            <person name="Ensigns S.A."/>
            <person name="Richardson P."/>
        </authorList>
    </citation>
    <scope>NUCLEOTIDE SEQUENCE [LARGE SCALE GENOMIC DNA]</scope>
    <source>
        <strain>ATCC BAA-1158 / Py2</strain>
    </source>
</reference>
<keyword id="KW-0233">DNA recombination</keyword>
<keyword id="KW-0238">DNA-binding</keyword>
<keyword id="KW-1185">Reference proteome</keyword>
<keyword id="KW-0804">Transcription</keyword>
<keyword id="KW-0805">Transcription regulation</keyword>
<keyword id="KW-0810">Translation regulation</keyword>
<proteinExistence type="inferred from homology"/>
<feature type="chain" id="PRO_1000122174" description="Integration host factor subunit alpha">
    <location>
        <begin position="1"/>
        <end position="105"/>
    </location>
</feature>
<sequence length="105" mass="11547">MAGRTVTRADLCEAVYQQVGLSRTESAQLVEMVLKEIADCLARGETVKLSSFGSFVVREKGERVGRNPKTGEEVPIEPRRVMVFKPSSILKHRINGTVGDGLDED</sequence>
<comment type="function">
    <text evidence="1">This protein is one of the two subunits of integration host factor, a specific DNA-binding protein that functions in genetic recombination as well as in transcriptional and translational control.</text>
</comment>
<comment type="subunit">
    <text evidence="1">Heterodimer of an alpha and a beta chain.</text>
</comment>
<comment type="similarity">
    <text evidence="1">Belongs to the bacterial histone-like protein family.</text>
</comment>
<dbReference type="EMBL" id="CP000781">
    <property type="protein sequence ID" value="ABS69607.1"/>
    <property type="molecule type" value="Genomic_DNA"/>
</dbReference>
<dbReference type="SMR" id="A7INL3"/>
<dbReference type="STRING" id="78245.Xaut_4386"/>
<dbReference type="KEGG" id="xau:Xaut_4386"/>
<dbReference type="eggNOG" id="COG0776">
    <property type="taxonomic scope" value="Bacteria"/>
</dbReference>
<dbReference type="HOGENOM" id="CLU_105066_1_1_5"/>
<dbReference type="OrthoDB" id="9797747at2"/>
<dbReference type="PhylomeDB" id="A7INL3"/>
<dbReference type="Proteomes" id="UP000002417">
    <property type="component" value="Chromosome"/>
</dbReference>
<dbReference type="GO" id="GO:0005829">
    <property type="term" value="C:cytosol"/>
    <property type="evidence" value="ECO:0007669"/>
    <property type="project" value="TreeGrafter"/>
</dbReference>
<dbReference type="GO" id="GO:0003677">
    <property type="term" value="F:DNA binding"/>
    <property type="evidence" value="ECO:0007669"/>
    <property type="project" value="UniProtKB-UniRule"/>
</dbReference>
<dbReference type="GO" id="GO:0030527">
    <property type="term" value="F:structural constituent of chromatin"/>
    <property type="evidence" value="ECO:0007669"/>
    <property type="project" value="InterPro"/>
</dbReference>
<dbReference type="GO" id="GO:0006310">
    <property type="term" value="P:DNA recombination"/>
    <property type="evidence" value="ECO:0007669"/>
    <property type="project" value="UniProtKB-UniRule"/>
</dbReference>
<dbReference type="GO" id="GO:0009893">
    <property type="term" value="P:positive regulation of metabolic process"/>
    <property type="evidence" value="ECO:0007669"/>
    <property type="project" value="UniProtKB-ARBA"/>
</dbReference>
<dbReference type="GO" id="GO:0006355">
    <property type="term" value="P:regulation of DNA-templated transcription"/>
    <property type="evidence" value="ECO:0007669"/>
    <property type="project" value="UniProtKB-UniRule"/>
</dbReference>
<dbReference type="GO" id="GO:0006417">
    <property type="term" value="P:regulation of translation"/>
    <property type="evidence" value="ECO:0007669"/>
    <property type="project" value="UniProtKB-UniRule"/>
</dbReference>
<dbReference type="CDD" id="cd13835">
    <property type="entry name" value="IHF_A"/>
    <property type="match status" value="1"/>
</dbReference>
<dbReference type="FunFam" id="4.10.520.10:FF:000010">
    <property type="entry name" value="Integration host factor subunit alpha"/>
    <property type="match status" value="1"/>
</dbReference>
<dbReference type="Gene3D" id="4.10.520.10">
    <property type="entry name" value="IHF-like DNA-binding proteins"/>
    <property type="match status" value="1"/>
</dbReference>
<dbReference type="HAMAP" id="MF_00380">
    <property type="entry name" value="IHF_alpha"/>
    <property type="match status" value="1"/>
</dbReference>
<dbReference type="InterPro" id="IPR000119">
    <property type="entry name" value="Hist_DNA-bd"/>
</dbReference>
<dbReference type="InterPro" id="IPR020816">
    <property type="entry name" value="Histone-like_DNA-bd_CS"/>
</dbReference>
<dbReference type="InterPro" id="IPR010992">
    <property type="entry name" value="IHF-like_DNA-bd_dom_sf"/>
</dbReference>
<dbReference type="InterPro" id="IPR005684">
    <property type="entry name" value="IHF_alpha"/>
</dbReference>
<dbReference type="NCBIfam" id="TIGR00987">
    <property type="entry name" value="himA"/>
    <property type="match status" value="1"/>
</dbReference>
<dbReference type="NCBIfam" id="NF001401">
    <property type="entry name" value="PRK00285.1"/>
    <property type="match status" value="1"/>
</dbReference>
<dbReference type="PANTHER" id="PTHR33175">
    <property type="entry name" value="DNA-BINDING PROTEIN HU"/>
    <property type="match status" value="1"/>
</dbReference>
<dbReference type="PANTHER" id="PTHR33175:SF2">
    <property type="entry name" value="INTEGRATION HOST FACTOR SUBUNIT ALPHA"/>
    <property type="match status" value="1"/>
</dbReference>
<dbReference type="Pfam" id="PF00216">
    <property type="entry name" value="Bac_DNA_binding"/>
    <property type="match status" value="1"/>
</dbReference>
<dbReference type="PRINTS" id="PR01727">
    <property type="entry name" value="DNABINDINGHU"/>
</dbReference>
<dbReference type="SMART" id="SM00411">
    <property type="entry name" value="BHL"/>
    <property type="match status" value="1"/>
</dbReference>
<dbReference type="SUPFAM" id="SSF47729">
    <property type="entry name" value="IHF-like DNA-binding proteins"/>
    <property type="match status" value="1"/>
</dbReference>
<dbReference type="PROSITE" id="PS00045">
    <property type="entry name" value="HISTONE_LIKE"/>
    <property type="match status" value="1"/>
</dbReference>
<name>IHFA_XANP2</name>
<accession>A7INL3</accession>
<organism>
    <name type="scientific">Xanthobacter autotrophicus (strain ATCC BAA-1158 / Py2)</name>
    <dbReference type="NCBI Taxonomy" id="78245"/>
    <lineage>
        <taxon>Bacteria</taxon>
        <taxon>Pseudomonadati</taxon>
        <taxon>Pseudomonadota</taxon>
        <taxon>Alphaproteobacteria</taxon>
        <taxon>Hyphomicrobiales</taxon>
        <taxon>Xanthobacteraceae</taxon>
        <taxon>Xanthobacter</taxon>
    </lineage>
</organism>
<protein>
    <recommendedName>
        <fullName evidence="1">Integration host factor subunit alpha</fullName>
        <shortName evidence="1">IHF-alpha</shortName>
    </recommendedName>
</protein>
<gene>
    <name evidence="1" type="primary">ihfA</name>
    <name evidence="1" type="synonym">himA</name>
    <name type="ordered locus">Xaut_4386</name>
</gene>